<proteinExistence type="inferred from homology"/>
<sequence>MHFETVIGLEVHVELKTDSKMFSPSPAHFGAEPNSNTNVIDLAYPGVLPVVNRRAVDWAMRASMALNMDIATNSKFDRKNYFYPDNPKAYQISQFDQPIGENGYIDIEVDGETKRIGITRLHMEEDAGKSTHKDGYSLVDLNRQGTPLIEIVSEPDIRSPKEAYAYLEKLRSIIQYTGVSDCKMEEGSLRCDANISLRPYGQKEFGTKTELKNLNSFNYVKKGLEYEEKRQEEELLNGGEIGQETRRFDESTGKTILMRVKEGSDDYRYFLEPDIVPLYVDEDWKARVRETIPELPDERKAKYVNDLGLPEYDAHVLTLTKEMSDFFEGAIDHGADVKLTSNWLMGGVNEYLNKNQVELKDTQLTPENLAGMIKLIEDGTMSSKIAKKVFPELAENGGDAKQIMEDKGLVQISDEATLLKFVTDALDNNPQSIEDYKNGKGKAMGFLVGQIMKASKGQANPQKVNSLLKQELDNR</sequence>
<keyword id="KW-0067">ATP-binding</keyword>
<keyword id="KW-0436">Ligase</keyword>
<keyword id="KW-0547">Nucleotide-binding</keyword>
<keyword id="KW-0648">Protein biosynthesis</keyword>
<name>GATB_STASP</name>
<reference key="1">
    <citation type="submission" date="1996-02" db="EMBL/GenBank/DDBJ databases">
        <authorList>
            <person name="Kim S.-I."/>
            <person name="Hong K.-W."/>
            <person name="Martins O.M."/>
            <person name="Stange-Thomann N."/>
            <person name="Soell D."/>
        </authorList>
    </citation>
    <scope>NUCLEOTIDE SEQUENCE [GENOMIC DNA]</scope>
</reference>
<evidence type="ECO:0000250" key="1"/>
<evidence type="ECO:0000305" key="2"/>
<accession>Q45486</accession>
<feature type="chain" id="PRO_0000148842" description="Aspartyl/glutamyl-tRNA(Asn/Gln) amidotransferase subunit B">
    <location>
        <begin position="1"/>
        <end position="475"/>
    </location>
</feature>
<protein>
    <recommendedName>
        <fullName>Aspartyl/glutamyl-tRNA(Asn/Gln) amidotransferase subunit B</fullName>
        <shortName>Asp/Glu-ADT subunit B</shortName>
        <ecNumber>6.3.5.-</ecNumber>
    </recommendedName>
</protein>
<gene>
    <name type="primary">gatB</name>
</gene>
<dbReference type="EC" id="6.3.5.-"/>
<dbReference type="EMBL" id="U49790">
    <property type="protein sequence ID" value="AAB61381.1"/>
    <property type="molecule type" value="Genomic_DNA"/>
</dbReference>
<dbReference type="SMR" id="Q45486"/>
<dbReference type="GO" id="GO:0050566">
    <property type="term" value="F:asparaginyl-tRNA synthase (glutamine-hydrolyzing) activity"/>
    <property type="evidence" value="ECO:0007669"/>
    <property type="project" value="RHEA"/>
</dbReference>
<dbReference type="GO" id="GO:0005524">
    <property type="term" value="F:ATP binding"/>
    <property type="evidence" value="ECO:0007669"/>
    <property type="project" value="UniProtKB-KW"/>
</dbReference>
<dbReference type="GO" id="GO:0050567">
    <property type="term" value="F:glutaminyl-tRNA synthase (glutamine-hydrolyzing) activity"/>
    <property type="evidence" value="ECO:0007669"/>
    <property type="project" value="UniProtKB-UniRule"/>
</dbReference>
<dbReference type="GO" id="GO:0070681">
    <property type="term" value="P:glutaminyl-tRNAGln biosynthesis via transamidation"/>
    <property type="evidence" value="ECO:0007669"/>
    <property type="project" value="TreeGrafter"/>
</dbReference>
<dbReference type="GO" id="GO:0006412">
    <property type="term" value="P:translation"/>
    <property type="evidence" value="ECO:0007669"/>
    <property type="project" value="UniProtKB-UniRule"/>
</dbReference>
<dbReference type="FunFam" id="1.10.10.410:FF:000001">
    <property type="entry name" value="Aspartyl/glutamyl-tRNA(Asn/Gln) amidotransferase subunit B"/>
    <property type="match status" value="1"/>
</dbReference>
<dbReference type="FunFam" id="1.10.150.380:FF:000001">
    <property type="entry name" value="Aspartyl/glutamyl-tRNA(Asn/Gln) amidotransferase subunit B"/>
    <property type="match status" value="1"/>
</dbReference>
<dbReference type="Gene3D" id="1.10.10.410">
    <property type="match status" value="1"/>
</dbReference>
<dbReference type="Gene3D" id="1.10.150.380">
    <property type="entry name" value="GatB domain, N-terminal subdomain"/>
    <property type="match status" value="1"/>
</dbReference>
<dbReference type="HAMAP" id="MF_00121">
    <property type="entry name" value="GatB"/>
    <property type="match status" value="1"/>
</dbReference>
<dbReference type="InterPro" id="IPR017959">
    <property type="entry name" value="Asn/Gln-tRNA_amidoTrfase_suB/E"/>
</dbReference>
<dbReference type="InterPro" id="IPR006075">
    <property type="entry name" value="Asn/Gln-tRNA_Trfase_suB/E_cat"/>
</dbReference>
<dbReference type="InterPro" id="IPR018027">
    <property type="entry name" value="Asn/Gln_amidotransferase"/>
</dbReference>
<dbReference type="InterPro" id="IPR003789">
    <property type="entry name" value="Asn/Gln_tRNA_amidoTrase-B-like"/>
</dbReference>
<dbReference type="InterPro" id="IPR004413">
    <property type="entry name" value="GatB"/>
</dbReference>
<dbReference type="InterPro" id="IPR042114">
    <property type="entry name" value="GatB_C_1"/>
</dbReference>
<dbReference type="InterPro" id="IPR023168">
    <property type="entry name" value="GatB_Yqey_C_2"/>
</dbReference>
<dbReference type="InterPro" id="IPR017958">
    <property type="entry name" value="Gln-tRNA_amidoTrfase_suB_CS"/>
</dbReference>
<dbReference type="InterPro" id="IPR014746">
    <property type="entry name" value="Gln_synth/guanido_kin_cat_dom"/>
</dbReference>
<dbReference type="NCBIfam" id="TIGR00133">
    <property type="entry name" value="gatB"/>
    <property type="match status" value="1"/>
</dbReference>
<dbReference type="NCBIfam" id="NF004011">
    <property type="entry name" value="PRK05477.1-1"/>
    <property type="match status" value="1"/>
</dbReference>
<dbReference type="NCBIfam" id="NF004012">
    <property type="entry name" value="PRK05477.1-2"/>
    <property type="match status" value="1"/>
</dbReference>
<dbReference type="NCBIfam" id="NF004014">
    <property type="entry name" value="PRK05477.1-4"/>
    <property type="match status" value="1"/>
</dbReference>
<dbReference type="PANTHER" id="PTHR11659">
    <property type="entry name" value="GLUTAMYL-TRNA GLN AMIDOTRANSFERASE SUBUNIT B MITOCHONDRIAL AND PROKARYOTIC PET112-RELATED"/>
    <property type="match status" value="1"/>
</dbReference>
<dbReference type="PANTHER" id="PTHR11659:SF0">
    <property type="entry name" value="GLUTAMYL-TRNA(GLN) AMIDOTRANSFERASE SUBUNIT B, MITOCHONDRIAL"/>
    <property type="match status" value="1"/>
</dbReference>
<dbReference type="Pfam" id="PF02934">
    <property type="entry name" value="GatB_N"/>
    <property type="match status" value="1"/>
</dbReference>
<dbReference type="Pfam" id="PF02637">
    <property type="entry name" value="GatB_Yqey"/>
    <property type="match status" value="1"/>
</dbReference>
<dbReference type="SMART" id="SM00845">
    <property type="entry name" value="GatB_Yqey"/>
    <property type="match status" value="1"/>
</dbReference>
<dbReference type="SUPFAM" id="SSF89095">
    <property type="entry name" value="GatB/YqeY motif"/>
    <property type="match status" value="1"/>
</dbReference>
<dbReference type="SUPFAM" id="SSF55931">
    <property type="entry name" value="Glutamine synthetase/guanido kinase"/>
    <property type="match status" value="1"/>
</dbReference>
<dbReference type="PROSITE" id="PS01234">
    <property type="entry name" value="GATB"/>
    <property type="match status" value="1"/>
</dbReference>
<comment type="function">
    <text evidence="1">Allows the formation of correctly charged Asn-tRNA(Asn) or Gln-tRNA(Gln) through the transamidation of misacylated Asp-tRNA(Asn) or Glu-tRNA(Gln) in organisms which lack either or both of asparaginyl-tRNA or glutaminyl-tRNA synthetases. The reaction takes place in the presence of glutamine and ATP through an activated phospho-Asp-tRNA(Asn) or phospho-Glu-tRNA(Gln) (By similarity).</text>
</comment>
<comment type="catalytic activity">
    <reaction>
        <text>L-glutamyl-tRNA(Gln) + L-glutamine + ATP + H2O = L-glutaminyl-tRNA(Gln) + L-glutamate + ADP + phosphate + H(+)</text>
        <dbReference type="Rhea" id="RHEA:17521"/>
        <dbReference type="Rhea" id="RHEA-COMP:9681"/>
        <dbReference type="Rhea" id="RHEA-COMP:9684"/>
        <dbReference type="ChEBI" id="CHEBI:15377"/>
        <dbReference type="ChEBI" id="CHEBI:15378"/>
        <dbReference type="ChEBI" id="CHEBI:29985"/>
        <dbReference type="ChEBI" id="CHEBI:30616"/>
        <dbReference type="ChEBI" id="CHEBI:43474"/>
        <dbReference type="ChEBI" id="CHEBI:58359"/>
        <dbReference type="ChEBI" id="CHEBI:78520"/>
        <dbReference type="ChEBI" id="CHEBI:78521"/>
        <dbReference type="ChEBI" id="CHEBI:456216"/>
    </reaction>
</comment>
<comment type="catalytic activity">
    <reaction>
        <text>L-aspartyl-tRNA(Asn) + L-glutamine + ATP + H2O = L-asparaginyl-tRNA(Asn) + L-glutamate + ADP + phosphate + 2 H(+)</text>
        <dbReference type="Rhea" id="RHEA:14513"/>
        <dbReference type="Rhea" id="RHEA-COMP:9674"/>
        <dbReference type="Rhea" id="RHEA-COMP:9677"/>
        <dbReference type="ChEBI" id="CHEBI:15377"/>
        <dbReference type="ChEBI" id="CHEBI:15378"/>
        <dbReference type="ChEBI" id="CHEBI:29985"/>
        <dbReference type="ChEBI" id="CHEBI:30616"/>
        <dbReference type="ChEBI" id="CHEBI:43474"/>
        <dbReference type="ChEBI" id="CHEBI:58359"/>
        <dbReference type="ChEBI" id="CHEBI:78515"/>
        <dbReference type="ChEBI" id="CHEBI:78516"/>
        <dbReference type="ChEBI" id="CHEBI:456216"/>
    </reaction>
</comment>
<comment type="subunit">
    <text evidence="1">Heterotrimer of A, B and C subunits.</text>
</comment>
<comment type="similarity">
    <text evidence="2">Belongs to the GatB/GatE family. GatB subfamily.</text>
</comment>
<comment type="caution">
    <text evidence="2">Was originally thought to originate from B.subtilis.</text>
</comment>
<organism>
    <name type="scientific">Staphylococcus sp</name>
    <dbReference type="NCBI Taxonomy" id="29387"/>
    <lineage>
        <taxon>Bacteria</taxon>
        <taxon>Bacillati</taxon>
        <taxon>Bacillota</taxon>
        <taxon>Bacilli</taxon>
        <taxon>Bacillales</taxon>
        <taxon>Staphylococcaceae</taxon>
        <taxon>Staphylococcus</taxon>
    </lineage>
</organism>